<gene>
    <name type="primary">Lect2</name>
</gene>
<feature type="signal peptide" evidence="2">
    <location>
        <begin position="1"/>
        <end position="18"/>
    </location>
</feature>
<feature type="chain" id="PRO_0000017365" description="Leukocyte cell-derived chemotaxin-2">
    <location>
        <begin position="19"/>
        <end position="151"/>
    </location>
</feature>
<feature type="binding site" evidence="1">
    <location>
        <position position="53"/>
    </location>
    <ligand>
        <name>Zn(2+)</name>
        <dbReference type="ChEBI" id="CHEBI:29105"/>
    </ligand>
</feature>
<feature type="binding site" evidence="1">
    <location>
        <position position="57"/>
    </location>
    <ligand>
        <name>Zn(2+)</name>
        <dbReference type="ChEBI" id="CHEBI:29105"/>
    </ligand>
</feature>
<feature type="binding site" evidence="1">
    <location>
        <position position="138"/>
    </location>
    <ligand>
        <name>Zn(2+)</name>
        <dbReference type="ChEBI" id="CHEBI:29105"/>
    </ligand>
</feature>
<feature type="disulfide bond" evidence="6">
    <location>
        <begin position="25"/>
        <end position="60"/>
    </location>
</feature>
<feature type="disulfide bond" evidence="6">
    <location>
        <begin position="36"/>
        <end position="41"/>
    </location>
</feature>
<feature type="disulfide bond" evidence="6">
    <location>
        <begin position="99"/>
        <end position="142"/>
    </location>
</feature>
<feature type="splice variant" id="VSP_003051" description="In isoform 2." evidence="9">
    <original>FCVKIFYIKPIKYKGSIKKGEKLGTLLPLQKIYPGIQSHVHVENCDSSDPTAYL</original>
    <variation>QRLQAHTTTLNVFTCYWDKIQIPRPTRFLCQNFLH</variation>
    <location>
        <begin position="98"/>
        <end position="151"/>
    </location>
</feature>
<feature type="sequence variant" evidence="4 5 7 8">
    <original>I</original>
    <variation>V</variation>
    <location>
        <position position="129"/>
    </location>
</feature>
<feature type="sequence conflict" description="In Ref. 5; AAH27753." evidence="10" ref="5">
    <original>V</original>
    <variation>F</variation>
    <location>
        <position position="100"/>
    </location>
</feature>
<proteinExistence type="evidence at protein level"/>
<keyword id="KW-0025">Alternative splicing</keyword>
<keyword id="KW-0145">Chemotaxis</keyword>
<keyword id="KW-1015">Disulfide bond</keyword>
<keyword id="KW-0479">Metal-binding</keyword>
<keyword id="KW-1185">Reference proteome</keyword>
<keyword id="KW-0964">Secreted</keyword>
<keyword id="KW-0732">Signal</keyword>
<keyword id="KW-0862">Zinc</keyword>
<comment type="function">
    <text evidence="3">Has a neutrophil chemotactic activity. Also a positive regulator of chondrocyte proliferation.</text>
</comment>
<comment type="interaction">
    <interactant intactId="EBI-8307190">
        <id>O88803</id>
    </interactant>
    <interactant intactId="EBI-8307190">
        <id>O88803</id>
        <label>Lect2</label>
    </interactant>
    <organismsDiffer>false</organismsDiffer>
    <experiments>8</experiments>
</comment>
<comment type="subcellular location">
    <subcellularLocation>
        <location evidence="1">Secreted</location>
    </subcellularLocation>
</comment>
<comment type="alternative products">
    <event type="alternative splicing"/>
    <isoform>
        <id>O88803-1</id>
        <name>1</name>
        <name>LECT2</name>
        <sequence type="displayed"/>
    </isoform>
    <isoform>
        <id>O88803-2</id>
        <name>2</name>
        <name>LECT2Q</name>
        <sequence type="described" ref="VSP_003051"/>
    </isoform>
</comment>
<comment type="tissue specificity">
    <text evidence="3">Highly expressed in liver and weakly in testis. Not expressed in heart, brain, spleen, lung, skeletal muscle and kidney.</text>
</comment>
<comment type="similarity">
    <text evidence="10">Belongs to the LECT2/MIM-1 family.</text>
</comment>
<sequence>MIPTTILISAALLSSALAGPWANICASKSSNEIRTCDSYGCGQYSAQRTQRHHPGVDVLCSDGSVVYAPFTGKIVGQEKPYRNKNAINDGIRLSGRGFCVKIFYIKPIKYKGSIKKGEKLGTLLPLQKIYPGIQSHVHVENCDSSDPTAYL</sequence>
<dbReference type="EMBL" id="AB009687">
    <property type="protein sequence ID" value="BAA33383.1"/>
    <property type="molecule type" value="mRNA"/>
</dbReference>
<dbReference type="EMBL" id="AB009688">
    <property type="protein sequence ID" value="BAA33384.1"/>
    <property type="molecule type" value="mRNA"/>
</dbReference>
<dbReference type="EMBL" id="AB009689">
    <property type="protein sequence ID" value="BAA33385.1"/>
    <property type="molecule type" value="Genomic_DNA"/>
</dbReference>
<dbReference type="EMBL" id="AB009689">
    <property type="protein sequence ID" value="BAA33386.1"/>
    <property type="molecule type" value="Genomic_DNA"/>
</dbReference>
<dbReference type="EMBL" id="AF035161">
    <property type="protein sequence ID" value="AAF13302.1"/>
    <property type="molecule type" value="mRNA"/>
</dbReference>
<dbReference type="EMBL" id="AK131971">
    <property type="protein sequence ID" value="BAE20911.1"/>
    <property type="molecule type" value="mRNA"/>
</dbReference>
<dbReference type="EMBL" id="CH466546">
    <property type="protein sequence ID" value="EDL41242.1"/>
    <property type="molecule type" value="Genomic_DNA"/>
</dbReference>
<dbReference type="EMBL" id="BC027753">
    <property type="protein sequence ID" value="AAH27753.1"/>
    <property type="molecule type" value="mRNA"/>
</dbReference>
<dbReference type="CCDS" id="CCDS26564.1">
    <molecule id="O88803-1"/>
</dbReference>
<dbReference type="RefSeq" id="NP_034832.2">
    <property type="nucleotide sequence ID" value="NM_010702.2"/>
</dbReference>
<dbReference type="SMR" id="O88803"/>
<dbReference type="FunCoup" id="O88803">
    <property type="interactions" value="3"/>
</dbReference>
<dbReference type="MINT" id="O88803"/>
<dbReference type="STRING" id="10090.ENSMUSP00000060495"/>
<dbReference type="iPTMnet" id="O88803"/>
<dbReference type="PhosphoSitePlus" id="O88803"/>
<dbReference type="CPTAC" id="non-CPTAC-3988"/>
<dbReference type="jPOST" id="O88803"/>
<dbReference type="PaxDb" id="10090-ENSMUSP00000060495"/>
<dbReference type="PeptideAtlas" id="O88803"/>
<dbReference type="ProteomicsDB" id="265057">
    <molecule id="O88803-1"/>
</dbReference>
<dbReference type="ProteomicsDB" id="265058">
    <molecule id="O88803-2"/>
</dbReference>
<dbReference type="DNASU" id="16841"/>
<dbReference type="GeneID" id="16841"/>
<dbReference type="KEGG" id="mmu:16841"/>
<dbReference type="UCSC" id="uc007qst.2">
    <molecule id="O88803-1"/>
    <property type="organism name" value="mouse"/>
</dbReference>
<dbReference type="UCSC" id="uc011zad.1">
    <molecule id="O88803-2"/>
    <property type="organism name" value="mouse"/>
</dbReference>
<dbReference type="AGR" id="MGI:1278342"/>
<dbReference type="CTD" id="3950"/>
<dbReference type="MGI" id="MGI:1278342">
    <property type="gene designation" value="Lect2"/>
</dbReference>
<dbReference type="eggNOG" id="ENOG502S16D">
    <property type="taxonomic scope" value="Eukaryota"/>
</dbReference>
<dbReference type="InParanoid" id="O88803"/>
<dbReference type="OrthoDB" id="5911921at2759"/>
<dbReference type="PhylomeDB" id="O88803"/>
<dbReference type="TreeFam" id="TF331097"/>
<dbReference type="BioGRID-ORCS" id="16841">
    <property type="hits" value="1 hit in 77 CRISPR screens"/>
</dbReference>
<dbReference type="PRO" id="PR:O88803"/>
<dbReference type="Proteomes" id="UP000000589">
    <property type="component" value="Unplaced"/>
</dbReference>
<dbReference type="RNAct" id="O88803">
    <property type="molecule type" value="protein"/>
</dbReference>
<dbReference type="GO" id="GO:0005576">
    <property type="term" value="C:extracellular region"/>
    <property type="evidence" value="ECO:0007669"/>
    <property type="project" value="UniProtKB-SubCell"/>
</dbReference>
<dbReference type="GO" id="GO:0042802">
    <property type="term" value="F:identical protein binding"/>
    <property type="evidence" value="ECO:0000353"/>
    <property type="project" value="IntAct"/>
</dbReference>
<dbReference type="GO" id="GO:0046872">
    <property type="term" value="F:metal ion binding"/>
    <property type="evidence" value="ECO:0007669"/>
    <property type="project" value="UniProtKB-KW"/>
</dbReference>
<dbReference type="GO" id="GO:0006935">
    <property type="term" value="P:chemotaxis"/>
    <property type="evidence" value="ECO:0007669"/>
    <property type="project" value="UniProtKB-KW"/>
</dbReference>
<dbReference type="GO" id="GO:0030178">
    <property type="term" value="P:negative regulation of Wnt signaling pathway"/>
    <property type="evidence" value="ECO:0000314"/>
    <property type="project" value="MGI"/>
</dbReference>
<dbReference type="FunFam" id="2.70.70.10:FF:000011">
    <property type="entry name" value="Leukocyte cell-derived chemotaxin-2"/>
    <property type="match status" value="1"/>
</dbReference>
<dbReference type="Gene3D" id="2.70.70.10">
    <property type="entry name" value="Glucose Permease (Domain IIA)"/>
    <property type="match status" value="1"/>
</dbReference>
<dbReference type="InterPro" id="IPR011055">
    <property type="entry name" value="Dup_hybrid_motif"/>
</dbReference>
<dbReference type="InterPro" id="IPR008663">
    <property type="entry name" value="LECT2"/>
</dbReference>
<dbReference type="InterPro" id="IPR017381">
    <property type="entry name" value="LECT2_chordata"/>
</dbReference>
<dbReference type="PANTHER" id="PTHR11329">
    <property type="entry name" value="LEUKOCYTE CELL-DERIVED CHEMOTAXIN 2"/>
    <property type="match status" value="1"/>
</dbReference>
<dbReference type="PANTHER" id="PTHR11329:SF0">
    <property type="entry name" value="LEUKOCYTE CELL-DERIVED CHEMOTAXIN-2"/>
    <property type="match status" value="1"/>
</dbReference>
<dbReference type="PIRSF" id="PIRSF038085">
    <property type="entry name" value="LECT3"/>
    <property type="match status" value="1"/>
</dbReference>
<organism>
    <name type="scientific">Mus musculus</name>
    <name type="common">Mouse</name>
    <dbReference type="NCBI Taxonomy" id="10090"/>
    <lineage>
        <taxon>Eukaryota</taxon>
        <taxon>Metazoa</taxon>
        <taxon>Chordata</taxon>
        <taxon>Craniata</taxon>
        <taxon>Vertebrata</taxon>
        <taxon>Euteleostomi</taxon>
        <taxon>Mammalia</taxon>
        <taxon>Eutheria</taxon>
        <taxon>Euarchontoglires</taxon>
        <taxon>Glires</taxon>
        <taxon>Rodentia</taxon>
        <taxon>Myomorpha</taxon>
        <taxon>Muroidea</taxon>
        <taxon>Muridae</taxon>
        <taxon>Murinae</taxon>
        <taxon>Mus</taxon>
        <taxon>Mus</taxon>
    </lineage>
</organism>
<reference key="1">
    <citation type="journal article" date="1998" name="Gene">
        <title>The mouse Lect2 gene: cloning of cDNA and genomic DNA, structural characterization and chromosomal localization.</title>
        <authorList>
            <person name="Yamagoe S."/>
            <person name="Watanabe T."/>
            <person name="Mizuno S."/>
            <person name="Suzuki K."/>
        </authorList>
    </citation>
    <scope>NUCLEOTIDE SEQUENCE [GENOMIC DNA / MRNA] (ISOFORMS 1 AND 2)</scope>
    <scope>VARIANT VAL-129</scope>
    <source>
        <strain>BALB/cJ</strain>
        <tissue>Liver</tissue>
    </source>
</reference>
<reference key="2">
    <citation type="journal article" date="1999" name="J. Biochem.">
        <title>Molecular cloning of mouse and bovine chondromodulin-II cDNAs and the growth-promoting actions of bovine recombinant protein.</title>
        <authorList>
            <person name="Shukunami C."/>
            <person name="Kondo J."/>
            <person name="Wakai H."/>
            <person name="Takahashi K."/>
            <person name="Inoue H."/>
            <person name="Kamizono A."/>
            <person name="Hiraki Y."/>
        </authorList>
    </citation>
    <scope>NUCLEOTIDE SEQUENCE [MRNA] (ISOFORM 1)</scope>
    <scope>FUNCTION</scope>
    <scope>TISSUE SPECIFICITY</scope>
    <source>
        <strain>Swiss Webster / NIH</strain>
        <tissue>Embryo</tissue>
        <tissue>Liver</tissue>
    </source>
</reference>
<reference key="3">
    <citation type="journal article" date="2005" name="Science">
        <title>The transcriptional landscape of the mammalian genome.</title>
        <authorList>
            <person name="Carninci P."/>
            <person name="Kasukawa T."/>
            <person name="Katayama S."/>
            <person name="Gough J."/>
            <person name="Frith M.C."/>
            <person name="Maeda N."/>
            <person name="Oyama R."/>
            <person name="Ravasi T."/>
            <person name="Lenhard B."/>
            <person name="Wells C."/>
            <person name="Kodzius R."/>
            <person name="Shimokawa K."/>
            <person name="Bajic V.B."/>
            <person name="Brenner S.E."/>
            <person name="Batalov S."/>
            <person name="Forrest A.R."/>
            <person name="Zavolan M."/>
            <person name="Davis M.J."/>
            <person name="Wilming L.G."/>
            <person name="Aidinis V."/>
            <person name="Allen J.E."/>
            <person name="Ambesi-Impiombato A."/>
            <person name="Apweiler R."/>
            <person name="Aturaliya R.N."/>
            <person name="Bailey T.L."/>
            <person name="Bansal M."/>
            <person name="Baxter L."/>
            <person name="Beisel K.W."/>
            <person name="Bersano T."/>
            <person name="Bono H."/>
            <person name="Chalk A.M."/>
            <person name="Chiu K.P."/>
            <person name="Choudhary V."/>
            <person name="Christoffels A."/>
            <person name="Clutterbuck D.R."/>
            <person name="Crowe M.L."/>
            <person name="Dalla E."/>
            <person name="Dalrymple B.P."/>
            <person name="de Bono B."/>
            <person name="Della Gatta G."/>
            <person name="di Bernardo D."/>
            <person name="Down T."/>
            <person name="Engstrom P."/>
            <person name="Fagiolini M."/>
            <person name="Faulkner G."/>
            <person name="Fletcher C.F."/>
            <person name="Fukushima T."/>
            <person name="Furuno M."/>
            <person name="Futaki S."/>
            <person name="Gariboldi M."/>
            <person name="Georgii-Hemming P."/>
            <person name="Gingeras T.R."/>
            <person name="Gojobori T."/>
            <person name="Green R.E."/>
            <person name="Gustincich S."/>
            <person name="Harbers M."/>
            <person name="Hayashi Y."/>
            <person name="Hensch T.K."/>
            <person name="Hirokawa N."/>
            <person name="Hill D."/>
            <person name="Huminiecki L."/>
            <person name="Iacono M."/>
            <person name="Ikeo K."/>
            <person name="Iwama A."/>
            <person name="Ishikawa T."/>
            <person name="Jakt M."/>
            <person name="Kanapin A."/>
            <person name="Katoh M."/>
            <person name="Kawasawa Y."/>
            <person name="Kelso J."/>
            <person name="Kitamura H."/>
            <person name="Kitano H."/>
            <person name="Kollias G."/>
            <person name="Krishnan S.P."/>
            <person name="Kruger A."/>
            <person name="Kummerfeld S.K."/>
            <person name="Kurochkin I.V."/>
            <person name="Lareau L.F."/>
            <person name="Lazarevic D."/>
            <person name="Lipovich L."/>
            <person name="Liu J."/>
            <person name="Liuni S."/>
            <person name="McWilliam S."/>
            <person name="Madan Babu M."/>
            <person name="Madera M."/>
            <person name="Marchionni L."/>
            <person name="Matsuda H."/>
            <person name="Matsuzawa S."/>
            <person name="Miki H."/>
            <person name="Mignone F."/>
            <person name="Miyake S."/>
            <person name="Morris K."/>
            <person name="Mottagui-Tabar S."/>
            <person name="Mulder N."/>
            <person name="Nakano N."/>
            <person name="Nakauchi H."/>
            <person name="Ng P."/>
            <person name="Nilsson R."/>
            <person name="Nishiguchi S."/>
            <person name="Nishikawa S."/>
            <person name="Nori F."/>
            <person name="Ohara O."/>
            <person name="Okazaki Y."/>
            <person name="Orlando V."/>
            <person name="Pang K.C."/>
            <person name="Pavan W.J."/>
            <person name="Pavesi G."/>
            <person name="Pesole G."/>
            <person name="Petrovsky N."/>
            <person name="Piazza S."/>
            <person name="Reed J."/>
            <person name="Reid J.F."/>
            <person name="Ring B.Z."/>
            <person name="Ringwald M."/>
            <person name="Rost B."/>
            <person name="Ruan Y."/>
            <person name="Salzberg S.L."/>
            <person name="Sandelin A."/>
            <person name="Schneider C."/>
            <person name="Schoenbach C."/>
            <person name="Sekiguchi K."/>
            <person name="Semple C.A."/>
            <person name="Seno S."/>
            <person name="Sessa L."/>
            <person name="Sheng Y."/>
            <person name="Shibata Y."/>
            <person name="Shimada H."/>
            <person name="Shimada K."/>
            <person name="Silva D."/>
            <person name="Sinclair B."/>
            <person name="Sperling S."/>
            <person name="Stupka E."/>
            <person name="Sugiura K."/>
            <person name="Sultana R."/>
            <person name="Takenaka Y."/>
            <person name="Taki K."/>
            <person name="Tammoja K."/>
            <person name="Tan S.L."/>
            <person name="Tang S."/>
            <person name="Taylor M.S."/>
            <person name="Tegner J."/>
            <person name="Teichmann S.A."/>
            <person name="Ueda H.R."/>
            <person name="van Nimwegen E."/>
            <person name="Verardo R."/>
            <person name="Wei C.L."/>
            <person name="Yagi K."/>
            <person name="Yamanishi H."/>
            <person name="Zabarovsky E."/>
            <person name="Zhu S."/>
            <person name="Zimmer A."/>
            <person name="Hide W."/>
            <person name="Bult C."/>
            <person name="Grimmond S.M."/>
            <person name="Teasdale R.D."/>
            <person name="Liu E.T."/>
            <person name="Brusic V."/>
            <person name="Quackenbush J."/>
            <person name="Wahlestedt C."/>
            <person name="Mattick J.S."/>
            <person name="Hume D.A."/>
            <person name="Kai C."/>
            <person name="Sasaki D."/>
            <person name="Tomaru Y."/>
            <person name="Fukuda S."/>
            <person name="Kanamori-Katayama M."/>
            <person name="Suzuki M."/>
            <person name="Aoki J."/>
            <person name="Arakawa T."/>
            <person name="Iida J."/>
            <person name="Imamura K."/>
            <person name="Itoh M."/>
            <person name="Kato T."/>
            <person name="Kawaji H."/>
            <person name="Kawagashira N."/>
            <person name="Kawashima T."/>
            <person name="Kojima M."/>
            <person name="Kondo S."/>
            <person name="Konno H."/>
            <person name="Nakano K."/>
            <person name="Ninomiya N."/>
            <person name="Nishio T."/>
            <person name="Okada M."/>
            <person name="Plessy C."/>
            <person name="Shibata K."/>
            <person name="Shiraki T."/>
            <person name="Suzuki S."/>
            <person name="Tagami M."/>
            <person name="Waki K."/>
            <person name="Watahiki A."/>
            <person name="Okamura-Oho Y."/>
            <person name="Suzuki H."/>
            <person name="Kawai J."/>
            <person name="Hayashizaki Y."/>
        </authorList>
    </citation>
    <scope>NUCLEOTIDE SEQUENCE [LARGE SCALE MRNA] (ISOFORM 1)</scope>
    <scope>VARIANT VAL-129</scope>
    <source>
        <strain>C57BL/6J</strain>
        <tissue>Liver</tissue>
    </source>
</reference>
<reference key="4">
    <citation type="submission" date="2005-07" db="EMBL/GenBank/DDBJ databases">
        <authorList>
            <person name="Mural R.J."/>
            <person name="Adams M.D."/>
            <person name="Myers E.W."/>
            <person name="Smith H.O."/>
            <person name="Venter J.C."/>
        </authorList>
    </citation>
    <scope>NUCLEOTIDE SEQUENCE [LARGE SCALE GENOMIC DNA]</scope>
    <scope>VARIANT VAL-129</scope>
</reference>
<reference key="5">
    <citation type="journal article" date="2004" name="Genome Res.">
        <title>The status, quality, and expansion of the NIH full-length cDNA project: the Mammalian Gene Collection (MGC).</title>
        <authorList>
            <consortium name="The MGC Project Team"/>
        </authorList>
    </citation>
    <scope>NUCLEOTIDE SEQUENCE [LARGE SCALE MRNA] (ISOFORM 1)</scope>
    <scope>VARIANT VAL-129</scope>
    <source>
        <strain>FVB/N</strain>
        <tissue>Liver</tissue>
    </source>
</reference>
<reference key="6">
    <citation type="journal article" date="2009" name="Biosci. Trends">
        <title>Identification and assignment of three disulfide bonds in mammalian leukocyte cell-derived chemotaxin 2 by matrix-assisted laser desorption/ionization time-of-flight mass spectrometry.</title>
        <authorList>
            <person name="Okumura A."/>
            <person name="Suzuki T."/>
            <person name="Dohmae N."/>
            <person name="Okabe T."/>
            <person name="Hashimoto Y."/>
            <person name="Nakazato K."/>
            <person name="Ohno H."/>
            <person name="Miyazaki Y."/>
            <person name="Yamagoe S."/>
        </authorList>
    </citation>
    <scope>DISULFIDE BONDS</scope>
</reference>
<accession>O88803</accession>
<accession>O88804</accession>
<accession>Q3V287</accession>
<accession>Q8K181</accession>
<accession>Q9QWN3</accession>
<accession>Q9Z337</accession>
<name>LECT2_MOUSE</name>
<evidence type="ECO:0000250" key="1">
    <source>
        <dbReference type="UniProtKB" id="O14960"/>
    </source>
</evidence>
<evidence type="ECO:0000250" key="2">
    <source>
        <dbReference type="UniProtKB" id="O62644"/>
    </source>
</evidence>
<evidence type="ECO:0000269" key="3">
    <source>
    </source>
</evidence>
<evidence type="ECO:0000269" key="4">
    <source>
    </source>
</evidence>
<evidence type="ECO:0000269" key="5">
    <source>
    </source>
</evidence>
<evidence type="ECO:0000269" key="6">
    <source>
    </source>
</evidence>
<evidence type="ECO:0000269" key="7">
    <source>
    </source>
</evidence>
<evidence type="ECO:0000269" key="8">
    <source ref="4"/>
</evidence>
<evidence type="ECO:0000303" key="9">
    <source>
    </source>
</evidence>
<evidence type="ECO:0000305" key="10"/>
<protein>
    <recommendedName>
        <fullName>Leukocyte cell-derived chemotaxin-2</fullName>
        <shortName>LECT-2</shortName>
    </recommendedName>
    <alternativeName>
        <fullName>Chondromodulin II</fullName>
        <shortName>ChM-II</shortName>
    </alternativeName>
</protein>